<dbReference type="EC" id="3.1.4.59" evidence="1"/>
<dbReference type="EMBL" id="D84432">
    <property type="protein sequence ID" value="BAA12478.1"/>
    <property type="molecule type" value="Genomic_DNA"/>
</dbReference>
<dbReference type="EMBL" id="U29177">
    <property type="protein sequence ID" value="AAA70040.1"/>
    <property type="status" value="ALT_FRAME"/>
    <property type="molecule type" value="Genomic_DNA"/>
</dbReference>
<dbReference type="EMBL" id="U29177">
    <property type="protein sequence ID" value="AAA70041.1"/>
    <property type="status" value="ALT_FRAME"/>
    <property type="molecule type" value="Genomic_DNA"/>
</dbReference>
<dbReference type="EMBL" id="U29177">
    <property type="protein sequence ID" value="AAA70042.1"/>
    <property type="status" value="ALT_FRAME"/>
    <property type="molecule type" value="Genomic_DNA"/>
</dbReference>
<dbReference type="EMBL" id="AL009126">
    <property type="protein sequence ID" value="CAB14462.1"/>
    <property type="molecule type" value="Genomic_DNA"/>
</dbReference>
<dbReference type="PIR" id="E69953">
    <property type="entry name" value="E69953"/>
</dbReference>
<dbReference type="RefSeq" id="NP_390411.1">
    <property type="nucleotide sequence ID" value="NC_000964.3"/>
</dbReference>
<dbReference type="RefSeq" id="WP_010886570.1">
    <property type="nucleotide sequence ID" value="NZ_OZ025638.1"/>
</dbReference>
<dbReference type="SMR" id="P46344"/>
<dbReference type="FunCoup" id="P46344">
    <property type="interactions" value="19"/>
</dbReference>
<dbReference type="IntAct" id="P46344">
    <property type="interactions" value="38"/>
</dbReference>
<dbReference type="STRING" id="224308.BSU25330"/>
<dbReference type="jPOST" id="P46344"/>
<dbReference type="PaxDb" id="224308-BSU25330"/>
<dbReference type="EnsemblBacteria" id="CAB14462">
    <property type="protein sequence ID" value="CAB14462"/>
    <property type="gene ID" value="BSU_25330"/>
</dbReference>
<dbReference type="GeneID" id="937877"/>
<dbReference type="KEGG" id="bsu:BSU25330"/>
<dbReference type="PATRIC" id="fig|224308.43.peg.2641"/>
<dbReference type="eggNOG" id="COG1480">
    <property type="taxonomic scope" value="Bacteria"/>
</dbReference>
<dbReference type="InParanoid" id="P46344"/>
<dbReference type="OrthoDB" id="9806952at2"/>
<dbReference type="PhylomeDB" id="P46344"/>
<dbReference type="BioCyc" id="BSUB:BSU25330-MONOMER"/>
<dbReference type="BRENDA" id="3.1.4.59">
    <property type="organism ID" value="658"/>
</dbReference>
<dbReference type="Proteomes" id="UP000001570">
    <property type="component" value="Chromosome"/>
</dbReference>
<dbReference type="GO" id="GO:0005886">
    <property type="term" value="C:plasma membrane"/>
    <property type="evidence" value="ECO:0007669"/>
    <property type="project" value="UniProtKB-SubCell"/>
</dbReference>
<dbReference type="GO" id="GO:0106409">
    <property type="term" value="F:cyclic-di-AMP phosphodiesterase activity"/>
    <property type="evidence" value="ECO:0007669"/>
    <property type="project" value="UniProtKB-EC"/>
</dbReference>
<dbReference type="GO" id="GO:0016787">
    <property type="term" value="F:hydrolase activity"/>
    <property type="evidence" value="ECO:0007669"/>
    <property type="project" value="UniProtKB-KW"/>
</dbReference>
<dbReference type="GO" id="GO:0046872">
    <property type="term" value="F:metal ion binding"/>
    <property type="evidence" value="ECO:0007669"/>
    <property type="project" value="UniProtKB-KW"/>
</dbReference>
<dbReference type="CDD" id="cd00077">
    <property type="entry name" value="HDc"/>
    <property type="match status" value="1"/>
</dbReference>
<dbReference type="CDD" id="cd12082">
    <property type="entry name" value="MATE_like"/>
    <property type="match status" value="1"/>
</dbReference>
<dbReference type="Gene3D" id="1.10.3210.10">
    <property type="entry name" value="Hypothetical protein af1432"/>
    <property type="match status" value="1"/>
</dbReference>
<dbReference type="InterPro" id="IPR003607">
    <property type="entry name" value="HD/PDEase_dom"/>
</dbReference>
<dbReference type="InterPro" id="IPR006674">
    <property type="entry name" value="HD_domain"/>
</dbReference>
<dbReference type="InterPro" id="IPR006675">
    <property type="entry name" value="HDIG_dom"/>
</dbReference>
<dbReference type="InterPro" id="IPR011624">
    <property type="entry name" value="Metal-dep_PHydrolase_7TM_extra"/>
</dbReference>
<dbReference type="InterPro" id="IPR011621">
    <property type="entry name" value="Metal-dep_PHydrolase_7TM_intra"/>
</dbReference>
<dbReference type="InterPro" id="IPR052722">
    <property type="entry name" value="PgpH_phosphodiesterase"/>
</dbReference>
<dbReference type="NCBIfam" id="TIGR00277">
    <property type="entry name" value="HDIG"/>
    <property type="match status" value="1"/>
</dbReference>
<dbReference type="PANTHER" id="PTHR36442">
    <property type="entry name" value="CYCLIC-DI-AMP PHOSPHODIESTERASE PGPH"/>
    <property type="match status" value="1"/>
</dbReference>
<dbReference type="PANTHER" id="PTHR36442:SF1">
    <property type="entry name" value="CYCLIC-DI-AMP PHOSPHODIESTERASE PGPH"/>
    <property type="match status" value="1"/>
</dbReference>
<dbReference type="Pfam" id="PF07698">
    <property type="entry name" value="7TM-7TMR_HD"/>
    <property type="match status" value="1"/>
</dbReference>
<dbReference type="Pfam" id="PF07697">
    <property type="entry name" value="7TMR-HDED"/>
    <property type="match status" value="1"/>
</dbReference>
<dbReference type="Pfam" id="PF01966">
    <property type="entry name" value="HD"/>
    <property type="match status" value="1"/>
</dbReference>
<dbReference type="SMART" id="SM00471">
    <property type="entry name" value="HDc"/>
    <property type="match status" value="1"/>
</dbReference>
<dbReference type="SUPFAM" id="SSF109604">
    <property type="entry name" value="HD-domain/PDEase-like"/>
    <property type="match status" value="1"/>
</dbReference>
<dbReference type="PROSITE" id="PS51831">
    <property type="entry name" value="HD"/>
    <property type="match status" value="1"/>
</dbReference>
<reference key="1">
    <citation type="journal article" date="1996" name="Microbiology">
        <title>Systematic sequencing of the 283 kb 210 degrees-232 degrees region of the Bacillus subtilis genome containing the skin element and many sporulation genes.</title>
        <authorList>
            <person name="Mizuno M."/>
            <person name="Masuda S."/>
            <person name="Takemaru K."/>
            <person name="Hosono S."/>
            <person name="Sato T."/>
            <person name="Takeuchi M."/>
            <person name="Kobayashi Y."/>
        </authorList>
    </citation>
    <scope>NUCLEOTIDE SEQUENCE [GENOMIC DNA]</scope>
    <source>
        <strain>168 / JH642</strain>
    </source>
</reference>
<reference key="2">
    <citation type="submission" date="1995-07" db="EMBL/GenBank/DDBJ databases">
        <title>Nucleotide sequence upstream of the cdd locus in Bacillus subtilis.</title>
        <authorList>
            <person name="Kim K."/>
            <person name="Hwang S."/>
            <person name="Suh J."/>
            <person name="Song B.-H."/>
            <person name="Hong S."/>
            <person name="Kim J."/>
        </authorList>
    </citation>
    <scope>NUCLEOTIDE SEQUENCE [GENOMIC DNA]</scope>
    <source>
        <strain>ED40</strain>
    </source>
</reference>
<reference key="3">
    <citation type="journal article" date="1997" name="Nature">
        <title>The complete genome sequence of the Gram-positive bacterium Bacillus subtilis.</title>
        <authorList>
            <person name="Kunst F."/>
            <person name="Ogasawara N."/>
            <person name="Moszer I."/>
            <person name="Albertini A.M."/>
            <person name="Alloni G."/>
            <person name="Azevedo V."/>
            <person name="Bertero M.G."/>
            <person name="Bessieres P."/>
            <person name="Bolotin A."/>
            <person name="Borchert S."/>
            <person name="Borriss R."/>
            <person name="Boursier L."/>
            <person name="Brans A."/>
            <person name="Braun M."/>
            <person name="Brignell S.C."/>
            <person name="Bron S."/>
            <person name="Brouillet S."/>
            <person name="Bruschi C.V."/>
            <person name="Caldwell B."/>
            <person name="Capuano V."/>
            <person name="Carter N.M."/>
            <person name="Choi S.-K."/>
            <person name="Codani J.-J."/>
            <person name="Connerton I.F."/>
            <person name="Cummings N.J."/>
            <person name="Daniel R.A."/>
            <person name="Denizot F."/>
            <person name="Devine K.M."/>
            <person name="Duesterhoeft A."/>
            <person name="Ehrlich S.D."/>
            <person name="Emmerson P.T."/>
            <person name="Entian K.-D."/>
            <person name="Errington J."/>
            <person name="Fabret C."/>
            <person name="Ferrari E."/>
            <person name="Foulger D."/>
            <person name="Fritz C."/>
            <person name="Fujita M."/>
            <person name="Fujita Y."/>
            <person name="Fuma S."/>
            <person name="Galizzi A."/>
            <person name="Galleron N."/>
            <person name="Ghim S.-Y."/>
            <person name="Glaser P."/>
            <person name="Goffeau A."/>
            <person name="Golightly E.J."/>
            <person name="Grandi G."/>
            <person name="Guiseppi G."/>
            <person name="Guy B.J."/>
            <person name="Haga K."/>
            <person name="Haiech J."/>
            <person name="Harwood C.R."/>
            <person name="Henaut A."/>
            <person name="Hilbert H."/>
            <person name="Holsappel S."/>
            <person name="Hosono S."/>
            <person name="Hullo M.-F."/>
            <person name="Itaya M."/>
            <person name="Jones L.-M."/>
            <person name="Joris B."/>
            <person name="Karamata D."/>
            <person name="Kasahara Y."/>
            <person name="Klaerr-Blanchard M."/>
            <person name="Klein C."/>
            <person name="Kobayashi Y."/>
            <person name="Koetter P."/>
            <person name="Koningstein G."/>
            <person name="Krogh S."/>
            <person name="Kumano M."/>
            <person name="Kurita K."/>
            <person name="Lapidus A."/>
            <person name="Lardinois S."/>
            <person name="Lauber J."/>
            <person name="Lazarevic V."/>
            <person name="Lee S.-M."/>
            <person name="Levine A."/>
            <person name="Liu H."/>
            <person name="Masuda S."/>
            <person name="Mauel C."/>
            <person name="Medigue C."/>
            <person name="Medina N."/>
            <person name="Mellado R.P."/>
            <person name="Mizuno M."/>
            <person name="Moestl D."/>
            <person name="Nakai S."/>
            <person name="Noback M."/>
            <person name="Noone D."/>
            <person name="O'Reilly M."/>
            <person name="Ogawa K."/>
            <person name="Ogiwara A."/>
            <person name="Oudega B."/>
            <person name="Park S.-H."/>
            <person name="Parro V."/>
            <person name="Pohl T.M."/>
            <person name="Portetelle D."/>
            <person name="Porwollik S."/>
            <person name="Prescott A.M."/>
            <person name="Presecan E."/>
            <person name="Pujic P."/>
            <person name="Purnelle B."/>
            <person name="Rapoport G."/>
            <person name="Rey M."/>
            <person name="Reynolds S."/>
            <person name="Rieger M."/>
            <person name="Rivolta C."/>
            <person name="Rocha E."/>
            <person name="Roche B."/>
            <person name="Rose M."/>
            <person name="Sadaie Y."/>
            <person name="Sato T."/>
            <person name="Scanlan E."/>
            <person name="Schleich S."/>
            <person name="Schroeter R."/>
            <person name="Scoffone F."/>
            <person name="Sekiguchi J."/>
            <person name="Sekowska A."/>
            <person name="Seror S.J."/>
            <person name="Serror P."/>
            <person name="Shin B.-S."/>
            <person name="Soldo B."/>
            <person name="Sorokin A."/>
            <person name="Tacconi E."/>
            <person name="Takagi T."/>
            <person name="Takahashi H."/>
            <person name="Takemaru K."/>
            <person name="Takeuchi M."/>
            <person name="Tamakoshi A."/>
            <person name="Tanaka T."/>
            <person name="Terpstra P."/>
            <person name="Tognoni A."/>
            <person name="Tosato V."/>
            <person name="Uchiyama S."/>
            <person name="Vandenbol M."/>
            <person name="Vannier F."/>
            <person name="Vassarotti A."/>
            <person name="Viari A."/>
            <person name="Wambutt R."/>
            <person name="Wedler E."/>
            <person name="Wedler H."/>
            <person name="Weitzenegger T."/>
            <person name="Winters P."/>
            <person name="Wipat A."/>
            <person name="Yamamoto H."/>
            <person name="Yamane K."/>
            <person name="Yasumoto K."/>
            <person name="Yata K."/>
            <person name="Yoshida K."/>
            <person name="Yoshikawa H.-F."/>
            <person name="Zumstein E."/>
            <person name="Yoshikawa H."/>
            <person name="Danchin A."/>
        </authorList>
    </citation>
    <scope>NUCLEOTIDE SEQUENCE [LARGE SCALE GENOMIC DNA]</scope>
    <source>
        <strain>168</strain>
    </source>
</reference>
<reference key="4">
    <citation type="journal article" date="2015" name="J. Bacteriol.">
        <title>An essential poison: synthesis and degradation of cyclic di-AMP in Bacillus subtilis.</title>
        <authorList>
            <person name="Gundlach J."/>
            <person name="Mehne F.M."/>
            <person name="Herzberg C."/>
            <person name="Kampf J."/>
            <person name="Valerius O."/>
            <person name="Kaever V."/>
            <person name="Stuelke J."/>
        </authorList>
    </citation>
    <scope>PROBABLE FUNCTION</scope>
    <scope>DISRUPTION PHENOTYPE</scope>
    <source>
        <strain>168</strain>
    </source>
</reference>
<name>PGPH_BACSU</name>
<comment type="function">
    <text evidence="5">Probably has phosphodiesterase (PDE) activity against cyclic-di-AMP (c-di-AMP); may be the major c-di-AMP PDE in the cell (PubMed:26240071). In B.subtilis c-di-AMP is a second messenger that mediates growth, DNA repair and cell wall homeostasis; it is toxic when present in excess (PubMed:26240071).</text>
</comment>
<comment type="catalytic activity">
    <reaction evidence="1">
        <text>3',3'-c-di-AMP + H2O = 5'-O-phosphonoadenylyl-(3'-&gt;5')-adenosine + H(+)</text>
        <dbReference type="Rhea" id="RHEA:54420"/>
        <dbReference type="ChEBI" id="CHEBI:15377"/>
        <dbReference type="ChEBI" id="CHEBI:15378"/>
        <dbReference type="ChEBI" id="CHEBI:71500"/>
        <dbReference type="ChEBI" id="CHEBI:138171"/>
        <dbReference type="EC" id="3.1.4.59"/>
    </reaction>
</comment>
<comment type="cofactor">
    <cofactor evidence="1">
        <name>Mn(2+)</name>
        <dbReference type="ChEBI" id="CHEBI:29035"/>
    </cofactor>
</comment>
<comment type="subcellular location">
    <subcellularLocation>
        <location evidence="7">Cell membrane</location>
        <topology evidence="7">Multi-pass membrane protein</topology>
    </subcellularLocation>
</comment>
<comment type="disruption phenotype">
    <text evidence="5">In strain 168 grown in minimal medium and glutamate, 3.5-fold increase in c-di-AMP levels, while a double pgpH-gdpP mutant has 4.2-fold increased levels of in c-di-AMP; double mutants die on solid medium after 2 days (PubMed:26240071).</text>
</comment>
<comment type="similarity">
    <text evidence="7">Belongs to the PgpH phosphodiesterase family.</text>
</comment>
<comment type="sequence caution" evidence="7">
    <conflict type="frameshift">
        <sequence resource="EMBL-CDS" id="AAA70040"/>
    </conflict>
</comment>
<comment type="sequence caution" evidence="7">
    <conflict type="frameshift">
        <sequence resource="EMBL-CDS" id="AAA70041"/>
    </conflict>
</comment>
<comment type="sequence caution" evidence="7">
    <conflict type="frameshift">
        <sequence resource="EMBL-CDS" id="AAA70042"/>
    </conflict>
</comment>
<evidence type="ECO:0000250" key="1">
    <source>
        <dbReference type="UniProtKB" id="A0A0H3GGY3"/>
    </source>
</evidence>
<evidence type="ECO:0000255" key="2"/>
<evidence type="ECO:0000255" key="3">
    <source>
        <dbReference type="PROSITE-ProRule" id="PRU01175"/>
    </source>
</evidence>
<evidence type="ECO:0000256" key="4">
    <source>
        <dbReference type="SAM" id="MobiDB-lite"/>
    </source>
</evidence>
<evidence type="ECO:0000269" key="5">
    <source>
    </source>
</evidence>
<evidence type="ECO:0000303" key="6">
    <source>
    </source>
</evidence>
<evidence type="ECO:0000305" key="7"/>
<proteinExistence type="inferred from homology"/>
<gene>
    <name evidence="6" type="primary">pgpH</name>
    <name type="synonym">yqfF</name>
    <name type="ordered locus">BSU25330</name>
</gene>
<feature type="chain" id="PRO_0000049797" description="Cyclic-di-AMP phosphodiesterase PgpH">
    <location>
        <begin position="1"/>
        <end position="711"/>
    </location>
</feature>
<feature type="transmembrane region" description="Helical" evidence="2">
    <location>
        <begin position="275"/>
        <end position="295"/>
    </location>
</feature>
<feature type="transmembrane region" description="Helical" evidence="2">
    <location>
        <begin position="311"/>
        <end position="331"/>
    </location>
</feature>
<feature type="transmembrane region" description="Helical" evidence="2">
    <location>
        <begin position="336"/>
        <end position="356"/>
    </location>
</feature>
<feature type="transmembrane region" description="Helical" evidence="2">
    <location>
        <begin position="360"/>
        <end position="380"/>
    </location>
</feature>
<feature type="transmembrane region" description="Helical" evidence="2">
    <location>
        <begin position="384"/>
        <end position="404"/>
    </location>
</feature>
<feature type="transmembrane region" description="Helical" evidence="2">
    <location>
        <begin position="413"/>
        <end position="433"/>
    </location>
</feature>
<feature type="transmembrane region" description="Helical" evidence="2">
    <location>
        <begin position="448"/>
        <end position="468"/>
    </location>
</feature>
<feature type="domain" description="HD" evidence="3">
    <location>
        <begin position="501"/>
        <end position="643"/>
    </location>
</feature>
<feature type="region of interest" description="Disordered" evidence="4">
    <location>
        <begin position="114"/>
        <end position="133"/>
    </location>
</feature>
<feature type="binding site" evidence="1">
    <location>
        <position position="504"/>
    </location>
    <ligand>
        <name>Mn(2+)</name>
        <dbReference type="ChEBI" id="CHEBI:29035"/>
        <label>1</label>
    </ligand>
</feature>
<feature type="binding site" evidence="1">
    <location>
        <position position="504"/>
    </location>
    <ligand>
        <name>substrate</name>
    </ligand>
</feature>
<feature type="binding site" evidence="1">
    <location>
        <position position="533"/>
    </location>
    <ligand>
        <name>Mn(2+)</name>
        <dbReference type="ChEBI" id="CHEBI:29035"/>
        <label>1</label>
    </ligand>
</feature>
<feature type="binding site" evidence="1">
    <location>
        <position position="534"/>
    </location>
    <ligand>
        <name>Mn(2+)</name>
        <dbReference type="ChEBI" id="CHEBI:29035"/>
        <label>1</label>
    </ligand>
</feature>
<feature type="binding site" evidence="1">
    <location>
        <position position="534"/>
    </location>
    <ligand>
        <name>Mn(2+)</name>
        <dbReference type="ChEBI" id="CHEBI:29035"/>
        <label>2</label>
    </ligand>
</feature>
<feature type="binding site" evidence="1">
    <location>
        <position position="570"/>
    </location>
    <ligand>
        <name>Mn(2+)</name>
        <dbReference type="ChEBI" id="CHEBI:29035"/>
        <label>2</label>
    </ligand>
</feature>
<feature type="binding site" evidence="1">
    <location>
        <position position="594"/>
    </location>
    <ligand>
        <name>Mn(2+)</name>
        <dbReference type="ChEBI" id="CHEBI:29035"/>
        <label>2</label>
    </ligand>
</feature>
<feature type="binding site" evidence="1">
    <location>
        <position position="595"/>
    </location>
    <ligand>
        <name>Mn(2+)</name>
        <dbReference type="ChEBI" id="CHEBI:29035"/>
        <label>2</label>
    </ligand>
</feature>
<feature type="binding site" evidence="1">
    <location>
        <position position="621"/>
    </location>
    <ligand>
        <name>substrate</name>
    </ligand>
</feature>
<feature type="binding site" evidence="1">
    <location>
        <position position="638"/>
    </location>
    <ligand>
        <name>Mn(2+)</name>
        <dbReference type="ChEBI" id="CHEBI:29035"/>
        <label>1</label>
    </ligand>
</feature>
<feature type="binding site" evidence="1">
    <location>
        <position position="638"/>
    </location>
    <ligand>
        <name>substrate</name>
    </ligand>
</feature>
<sequence>MLKKKAKTKSSSKKWSSFKNARSMHVLLYLLLAAIMFALLFVHVKPETLDLDLFSVSDKTIYAPATVEDQKATEEKKQAAEDAVEDQYTLKKEYTDNRIDLVSSIFDSISEVKKSSEEGSKSPSEKSMVKSVKDKLTSDVNDSISEDSIKTLLKADSEDFSFVRDTVITAVNTVMSSEIPSDKLSDAKDKVEKELKSNSIPSKYLGAATEIGRFAIIPNYVFDPKATEAKRQEASDNVQQVQIKQGQVLVEENDLIDREVYRKLELTGLLNNSNLFKPISGLLIMIGLFIATLVYYFEKQKQNLKFKNQSILLFSIITTLLLVIMEVVSLFQKMEYNNIGYLVPIAAGAILIKLLMNERIAILGSIILAICGSMMFNQGVTGTFNYVIGIYYLISGISGVLFLGKHNARSKILQTGLFVAFINMVVVLSLLLIQNTALSGLEIGTLMLMGVVSGFASSVLIIGLMPFFETGFGILSTMRLLELSNPNHPLLRKILTETPGTYHHSVMVANLSEAACEAVGANGLLARVGAYYHDLGKTKRPQYFIENQMNIDNPHDKLSPQLSKNIIISHTTDGANMLRSYKFPKELVDIAEQHHGTSLLKFFYYKAKEKGDQITEEEFRYPGPKPQSKEAAIISVADSVEAAVRSMHNPNPERIEKLVRGIISDKLQDGQFSECDLTFKELDTIAKTLCATLKGIFHSRIEYPEATKKVK</sequence>
<protein>
    <recommendedName>
        <fullName evidence="6">Cyclic-di-AMP phosphodiesterase PgpH</fullName>
        <shortName>c-di-AMP phosphodiesterase</shortName>
        <ecNumber evidence="1">3.1.4.59</ecNumber>
    </recommendedName>
</protein>
<accession>P46344</accession>
<accession>P46345</accession>
<accession>P46346</accession>
<organism>
    <name type="scientific">Bacillus subtilis (strain 168)</name>
    <dbReference type="NCBI Taxonomy" id="224308"/>
    <lineage>
        <taxon>Bacteria</taxon>
        <taxon>Bacillati</taxon>
        <taxon>Bacillota</taxon>
        <taxon>Bacilli</taxon>
        <taxon>Bacillales</taxon>
        <taxon>Bacillaceae</taxon>
        <taxon>Bacillus</taxon>
    </lineage>
</organism>
<keyword id="KW-1003">Cell membrane</keyword>
<keyword id="KW-0378">Hydrolase</keyword>
<keyword id="KW-0464">Manganese</keyword>
<keyword id="KW-0472">Membrane</keyword>
<keyword id="KW-0479">Metal-binding</keyword>
<keyword id="KW-1185">Reference proteome</keyword>
<keyword id="KW-0812">Transmembrane</keyword>
<keyword id="KW-1133">Transmembrane helix</keyword>